<keyword id="KW-0050">Antiport</keyword>
<keyword id="KW-0997">Cell inner membrane</keyword>
<keyword id="KW-1003">Cell membrane</keyword>
<keyword id="KW-0472">Membrane</keyword>
<keyword id="KW-1185">Reference proteome</keyword>
<keyword id="KW-0812">Transmembrane</keyword>
<keyword id="KW-1133">Transmembrane helix</keyword>
<keyword id="KW-0813">Transport</keyword>
<gene>
    <name type="primary">ttdT</name>
    <name type="ordered locus">SSON_3200</name>
</gene>
<reference key="1">
    <citation type="journal article" date="2005" name="Nucleic Acids Res.">
        <title>Genome dynamics and diversity of Shigella species, the etiologic agents of bacillary dysentery.</title>
        <authorList>
            <person name="Yang F."/>
            <person name="Yang J."/>
            <person name="Zhang X."/>
            <person name="Chen L."/>
            <person name="Jiang Y."/>
            <person name="Yan Y."/>
            <person name="Tang X."/>
            <person name="Wang J."/>
            <person name="Xiong Z."/>
            <person name="Dong J."/>
            <person name="Xue Y."/>
            <person name="Zhu Y."/>
            <person name="Xu X."/>
            <person name="Sun L."/>
            <person name="Chen S."/>
            <person name="Nie H."/>
            <person name="Peng J."/>
            <person name="Xu J."/>
            <person name="Wang Y."/>
            <person name="Yuan Z."/>
            <person name="Wen Y."/>
            <person name="Yao Z."/>
            <person name="Shen Y."/>
            <person name="Qiang B."/>
            <person name="Hou Y."/>
            <person name="Yu J."/>
            <person name="Jin Q."/>
        </authorList>
    </citation>
    <scope>NUCLEOTIDE SEQUENCE [LARGE SCALE GENOMIC DNA]</scope>
    <source>
        <strain>Ss046</strain>
    </source>
</reference>
<dbReference type="EMBL" id="CP000038">
    <property type="protein sequence ID" value="AAZ89782.1"/>
    <property type="molecule type" value="Genomic_DNA"/>
</dbReference>
<dbReference type="RefSeq" id="WP_000804919.1">
    <property type="nucleotide sequence ID" value="NC_007384.1"/>
</dbReference>
<dbReference type="SMR" id="Q3YXI0"/>
<dbReference type="GeneID" id="93778930"/>
<dbReference type="KEGG" id="ssn:SSON_3200"/>
<dbReference type="HOGENOM" id="CLU_005170_7_0_6"/>
<dbReference type="Proteomes" id="UP000002529">
    <property type="component" value="Chromosome"/>
</dbReference>
<dbReference type="GO" id="GO:0005886">
    <property type="term" value="C:plasma membrane"/>
    <property type="evidence" value="ECO:0007669"/>
    <property type="project" value="UniProtKB-SubCell"/>
</dbReference>
<dbReference type="GO" id="GO:0015297">
    <property type="term" value="F:antiporter activity"/>
    <property type="evidence" value="ECO:0007669"/>
    <property type="project" value="UniProtKB-KW"/>
</dbReference>
<dbReference type="InterPro" id="IPR030676">
    <property type="entry name" value="CitT-rel"/>
</dbReference>
<dbReference type="InterPro" id="IPR001898">
    <property type="entry name" value="SLC13A/DASS"/>
</dbReference>
<dbReference type="NCBIfam" id="TIGR00785">
    <property type="entry name" value="dass"/>
    <property type="match status" value="1"/>
</dbReference>
<dbReference type="PANTHER" id="PTHR42826">
    <property type="entry name" value="DICARBOXYLATE TRANSPORTER 2.1, CHLOROPLASTIC"/>
    <property type="match status" value="1"/>
</dbReference>
<dbReference type="Pfam" id="PF00939">
    <property type="entry name" value="Na_sulph_symp"/>
    <property type="match status" value="1"/>
</dbReference>
<dbReference type="PIRSF" id="PIRSF002457">
    <property type="entry name" value="DASS"/>
    <property type="match status" value="1"/>
</dbReference>
<feature type="chain" id="PRO_0000262718" description="L-tartrate/succinate antiporter">
    <location>
        <begin position="1"/>
        <end position="487"/>
    </location>
</feature>
<feature type="transmembrane region" description="Helical" evidence="2">
    <location>
        <begin position="10"/>
        <end position="30"/>
    </location>
</feature>
<feature type="transmembrane region" description="Helical" evidence="2">
    <location>
        <begin position="33"/>
        <end position="53"/>
    </location>
</feature>
<feature type="transmembrane region" description="Helical" evidence="2">
    <location>
        <begin position="54"/>
        <end position="74"/>
    </location>
</feature>
<feature type="transmembrane region" description="Helical" evidence="2">
    <location>
        <begin position="93"/>
        <end position="113"/>
    </location>
</feature>
<feature type="transmembrane region" description="Helical" evidence="2">
    <location>
        <begin position="137"/>
        <end position="157"/>
    </location>
</feature>
<feature type="transmembrane region" description="Helical" evidence="2">
    <location>
        <begin position="189"/>
        <end position="209"/>
    </location>
</feature>
<feature type="transmembrane region" description="Helical" evidence="2">
    <location>
        <begin position="236"/>
        <end position="256"/>
    </location>
</feature>
<feature type="transmembrane region" description="Helical" evidence="2">
    <location>
        <begin position="292"/>
        <end position="312"/>
    </location>
</feature>
<feature type="transmembrane region" description="Helical" evidence="2">
    <location>
        <begin position="313"/>
        <end position="333"/>
    </location>
</feature>
<feature type="transmembrane region" description="Helical" evidence="2">
    <location>
        <begin position="340"/>
        <end position="360"/>
    </location>
</feature>
<feature type="transmembrane region" description="Helical" evidence="2">
    <location>
        <begin position="370"/>
        <end position="390"/>
    </location>
</feature>
<feature type="transmembrane region" description="Helical" evidence="2">
    <location>
        <begin position="393"/>
        <end position="413"/>
    </location>
</feature>
<feature type="transmembrane region" description="Helical" evidence="2">
    <location>
        <begin position="418"/>
        <end position="438"/>
    </location>
</feature>
<feature type="transmembrane region" description="Helical" evidence="2">
    <location>
        <begin position="465"/>
        <end position="485"/>
    </location>
</feature>
<sequence>MKPSTEWWRYLAPLAVIAIIALIPVPAGLESHTWLYFAVFTGVIVGLILEPVPGAVVAMVGISIIAILSPWLLFSPEQLAQPGFKFTAKSLSWAVSGFSNSVIWLIFAAFMFGTGYEKTGLGRRIALILVKKMGHRTLFLGYAVMFSELILAPVTPSNSARGAGIIYPIIRNLPPLYQSQPNDSSSRSIGSYIMWMGIVADCVTSAIFLTAMAPNLLLIGLMKSASHATLSWGDWFLGMLPLSILLVLLVPWLAYVLYPPVLKSGDQVPRWAETELQAMGPLCSREKRMLGLIVGALVLWIFGGDYIDAAMVGYSVVALMLLLRIISWDDIVSNKAAWNVFFWLASLITLATGLNNTGFISWFGKLLAGSLSGYSPTMVMVALIVVFYLLRYFFASATAYTSALAPMMIAAALAMPEIPLPVFCLMVGAAIGLGSILTPYATGPSPIYYGSGYLPTADYWRLGAIFGLIFLVLLVITGLLWMPVVLL</sequence>
<organism>
    <name type="scientific">Shigella sonnei (strain Ss046)</name>
    <dbReference type="NCBI Taxonomy" id="300269"/>
    <lineage>
        <taxon>Bacteria</taxon>
        <taxon>Pseudomonadati</taxon>
        <taxon>Pseudomonadota</taxon>
        <taxon>Gammaproteobacteria</taxon>
        <taxon>Enterobacterales</taxon>
        <taxon>Enterobacteriaceae</taxon>
        <taxon>Shigella</taxon>
    </lineage>
</organism>
<name>TTDT_SHISS</name>
<proteinExistence type="inferred from homology"/>
<evidence type="ECO:0000250" key="1">
    <source>
        <dbReference type="UniProtKB" id="P39414"/>
    </source>
</evidence>
<evidence type="ECO:0000255" key="2"/>
<evidence type="ECO:0000305" key="3"/>
<accession>Q3YXI0</accession>
<comment type="function">
    <text evidence="1">Catalyzes the uptake of tartrate in exchange for intracellular succinate. Essential for anaerobic L-tartrate fermentation.</text>
</comment>
<comment type="catalytic activity">
    <reaction evidence="1">
        <text>(2R,3R)-tartrate(out) + succinate(in) = (2R,3R)-tartrate(in) + succinate(out)</text>
        <dbReference type="Rhea" id="RHEA:29259"/>
        <dbReference type="ChEBI" id="CHEBI:30031"/>
        <dbReference type="ChEBI" id="CHEBI:30924"/>
    </reaction>
    <physiologicalReaction direction="left-to-right" evidence="1">
        <dbReference type="Rhea" id="RHEA:29260"/>
    </physiologicalReaction>
</comment>
<comment type="subcellular location">
    <subcellularLocation>
        <location evidence="1">Cell inner membrane</location>
        <topology evidence="2">Multi-pass membrane protein</topology>
    </subcellularLocation>
</comment>
<comment type="similarity">
    <text evidence="3">Belongs to the SLC13A/DASS transporter (TC 2.A.47) family. DIT1 subfamily.</text>
</comment>
<protein>
    <recommendedName>
        <fullName evidence="1">L-tartrate/succinate antiporter</fullName>
    </recommendedName>
    <alternativeName>
        <fullName>Tartrate carrier</fullName>
    </alternativeName>
    <alternativeName>
        <fullName>Tartrate transporter</fullName>
    </alternativeName>
</protein>